<name>AGO4B_ORYSJ</name>
<dbReference type="EMBL" id="AP008210">
    <property type="protein sequence ID" value="BAF14029.1"/>
    <property type="molecule type" value="Genomic_DNA"/>
</dbReference>
<dbReference type="EMBL" id="AP014960">
    <property type="protein sequence ID" value="BAS87801.1"/>
    <property type="molecule type" value="Genomic_DNA"/>
</dbReference>
<dbReference type="EMBL" id="CM000141">
    <property type="protein sequence ID" value="EEE60454.1"/>
    <property type="molecule type" value="Genomic_DNA"/>
</dbReference>
<dbReference type="EMBL" id="AK122078">
    <property type="status" value="NOT_ANNOTATED_CDS"/>
    <property type="molecule type" value="mRNA"/>
</dbReference>
<dbReference type="RefSeq" id="XP_015636673.1">
    <property type="nucleotide sequence ID" value="XM_015781187.1"/>
</dbReference>
<dbReference type="SMR" id="Q0JF58"/>
<dbReference type="FunCoup" id="Q0JF58">
    <property type="interactions" value="627"/>
</dbReference>
<dbReference type="STRING" id="39947.Q0JF58"/>
<dbReference type="iPTMnet" id="Q0JF58"/>
<dbReference type="PaxDb" id="39947-Q0JF58"/>
<dbReference type="EnsemblPlants" id="Os04t0151800-01">
    <property type="protein sequence ID" value="Os04t0151800-01"/>
    <property type="gene ID" value="Os04g0151800"/>
</dbReference>
<dbReference type="EnsemblPlants" id="Os04t0151800-02">
    <property type="protein sequence ID" value="Os04t0151800-02"/>
    <property type="gene ID" value="Os04g0151800"/>
</dbReference>
<dbReference type="Gramene" id="Os04t0151800-01">
    <property type="protein sequence ID" value="Os04t0151800-01"/>
    <property type="gene ID" value="Os04g0151800"/>
</dbReference>
<dbReference type="Gramene" id="Os04t0151800-02">
    <property type="protein sequence ID" value="Os04t0151800-02"/>
    <property type="gene ID" value="Os04g0151800"/>
</dbReference>
<dbReference type="KEGG" id="dosa:Os04g0151800"/>
<dbReference type="eggNOG" id="KOG1041">
    <property type="taxonomic scope" value="Eukaryota"/>
</dbReference>
<dbReference type="HOGENOM" id="CLU_004544_2_0_1"/>
<dbReference type="InParanoid" id="Q0JF58"/>
<dbReference type="OMA" id="HPDRIDW"/>
<dbReference type="OrthoDB" id="10252740at2759"/>
<dbReference type="Proteomes" id="UP000000763">
    <property type="component" value="Chromosome 4"/>
</dbReference>
<dbReference type="Proteomes" id="UP000007752">
    <property type="component" value="Chromosome 4"/>
</dbReference>
<dbReference type="Proteomes" id="UP000059680">
    <property type="component" value="Chromosome 4"/>
</dbReference>
<dbReference type="ExpressionAtlas" id="Q0JF58">
    <property type="expression patterns" value="baseline and differential"/>
</dbReference>
<dbReference type="GO" id="GO:0005737">
    <property type="term" value="C:cytoplasm"/>
    <property type="evidence" value="ECO:0000318"/>
    <property type="project" value="GO_Central"/>
</dbReference>
<dbReference type="GO" id="GO:0005634">
    <property type="term" value="C:nucleus"/>
    <property type="evidence" value="ECO:0000318"/>
    <property type="project" value="GO_Central"/>
</dbReference>
<dbReference type="GO" id="GO:0003723">
    <property type="term" value="F:RNA binding"/>
    <property type="evidence" value="ECO:0000318"/>
    <property type="project" value="GO_Central"/>
</dbReference>
<dbReference type="GO" id="GO:0004521">
    <property type="term" value="F:RNA endonuclease activity"/>
    <property type="evidence" value="ECO:0000318"/>
    <property type="project" value="GO_Central"/>
</dbReference>
<dbReference type="GO" id="GO:0031047">
    <property type="term" value="P:regulatory ncRNA-mediated gene silencing"/>
    <property type="evidence" value="ECO:0000318"/>
    <property type="project" value="GO_Central"/>
</dbReference>
<dbReference type="CDD" id="cd02846">
    <property type="entry name" value="PAZ_argonaute_like"/>
    <property type="match status" value="1"/>
</dbReference>
<dbReference type="CDD" id="cd04657">
    <property type="entry name" value="Piwi_ago-like"/>
    <property type="match status" value="1"/>
</dbReference>
<dbReference type="FunFam" id="3.30.420.10:FF:000091">
    <property type="entry name" value="Protein argonaute 3"/>
    <property type="match status" value="1"/>
</dbReference>
<dbReference type="FunFam" id="2.170.260.10:FF:000008">
    <property type="entry name" value="Protein argonaute 7"/>
    <property type="match status" value="1"/>
</dbReference>
<dbReference type="Gene3D" id="3.40.50.2300">
    <property type="match status" value="1"/>
</dbReference>
<dbReference type="Gene3D" id="2.170.260.10">
    <property type="entry name" value="paz domain"/>
    <property type="match status" value="1"/>
</dbReference>
<dbReference type="Gene3D" id="3.30.420.10">
    <property type="entry name" value="Ribonuclease H-like superfamily/Ribonuclease H"/>
    <property type="match status" value="1"/>
</dbReference>
<dbReference type="InterPro" id="IPR014811">
    <property type="entry name" value="ArgoL1"/>
</dbReference>
<dbReference type="InterPro" id="IPR032472">
    <property type="entry name" value="ArgoL2"/>
</dbReference>
<dbReference type="InterPro" id="IPR032473">
    <property type="entry name" value="Argonaute_Mid_dom"/>
</dbReference>
<dbReference type="InterPro" id="IPR032474">
    <property type="entry name" value="Argonaute_N"/>
</dbReference>
<dbReference type="InterPro" id="IPR003100">
    <property type="entry name" value="PAZ_dom"/>
</dbReference>
<dbReference type="InterPro" id="IPR036085">
    <property type="entry name" value="PAZ_dom_sf"/>
</dbReference>
<dbReference type="InterPro" id="IPR003165">
    <property type="entry name" value="Piwi"/>
</dbReference>
<dbReference type="InterPro" id="IPR045246">
    <property type="entry name" value="Piwi_ago-like"/>
</dbReference>
<dbReference type="InterPro" id="IPR012337">
    <property type="entry name" value="RNaseH-like_sf"/>
</dbReference>
<dbReference type="InterPro" id="IPR036397">
    <property type="entry name" value="RNaseH_sf"/>
</dbReference>
<dbReference type="PANTHER" id="PTHR22891">
    <property type="entry name" value="EUKARYOTIC TRANSLATION INITIATION FACTOR 2C"/>
    <property type="match status" value="1"/>
</dbReference>
<dbReference type="Pfam" id="PF08699">
    <property type="entry name" value="ArgoL1"/>
    <property type="match status" value="1"/>
</dbReference>
<dbReference type="Pfam" id="PF16488">
    <property type="entry name" value="ArgoL2"/>
    <property type="match status" value="1"/>
</dbReference>
<dbReference type="Pfam" id="PF16487">
    <property type="entry name" value="ArgoMid"/>
    <property type="match status" value="1"/>
</dbReference>
<dbReference type="Pfam" id="PF16486">
    <property type="entry name" value="ArgoN"/>
    <property type="match status" value="1"/>
</dbReference>
<dbReference type="Pfam" id="PF02170">
    <property type="entry name" value="PAZ"/>
    <property type="match status" value="1"/>
</dbReference>
<dbReference type="Pfam" id="PF02171">
    <property type="entry name" value="Piwi"/>
    <property type="match status" value="1"/>
</dbReference>
<dbReference type="SMART" id="SM01163">
    <property type="entry name" value="DUF1785"/>
    <property type="match status" value="1"/>
</dbReference>
<dbReference type="SMART" id="SM00950">
    <property type="entry name" value="Piwi"/>
    <property type="match status" value="1"/>
</dbReference>
<dbReference type="SUPFAM" id="SSF101690">
    <property type="entry name" value="PAZ domain"/>
    <property type="match status" value="1"/>
</dbReference>
<dbReference type="SUPFAM" id="SSF53098">
    <property type="entry name" value="Ribonuclease H-like"/>
    <property type="match status" value="1"/>
</dbReference>
<dbReference type="PROSITE" id="PS50821">
    <property type="entry name" value="PAZ"/>
    <property type="match status" value="1"/>
</dbReference>
<dbReference type="PROSITE" id="PS50822">
    <property type="entry name" value="PIWI"/>
    <property type="match status" value="1"/>
</dbReference>
<proteinExistence type="evidence at transcript level"/>
<organism>
    <name type="scientific">Oryza sativa subsp. japonica</name>
    <name type="common">Rice</name>
    <dbReference type="NCBI Taxonomy" id="39947"/>
    <lineage>
        <taxon>Eukaryota</taxon>
        <taxon>Viridiplantae</taxon>
        <taxon>Streptophyta</taxon>
        <taxon>Embryophyta</taxon>
        <taxon>Tracheophyta</taxon>
        <taxon>Spermatophyta</taxon>
        <taxon>Magnoliopsida</taxon>
        <taxon>Liliopsida</taxon>
        <taxon>Poales</taxon>
        <taxon>Poaceae</taxon>
        <taxon>BOP clade</taxon>
        <taxon>Oryzoideae</taxon>
        <taxon>Oryzeae</taxon>
        <taxon>Oryzinae</taxon>
        <taxon>Oryza</taxon>
        <taxon>Oryza sativa</taxon>
    </lineage>
</organism>
<feature type="chain" id="PRO_0000378432" description="Protein argonaute 4B">
    <location>
        <begin position="1"/>
        <end position="911"/>
    </location>
</feature>
<feature type="domain" description="PAZ" evidence="2">
    <location>
        <begin position="281"/>
        <end position="396"/>
    </location>
</feature>
<feature type="domain" description="Piwi" evidence="3">
    <location>
        <begin position="565"/>
        <end position="872"/>
    </location>
</feature>
<feature type="region of interest" description="Disordered" evidence="4">
    <location>
        <begin position="1"/>
        <end position="51"/>
    </location>
</feature>
<feature type="region of interest" description="Disordered" evidence="4">
    <location>
        <begin position="149"/>
        <end position="171"/>
    </location>
</feature>
<feature type="sequence conflict" description="In Ref. 5; AK122078." evidence="5" ref="5">
    <original>D</original>
    <variation>V</variation>
    <location>
        <position position="531"/>
    </location>
</feature>
<comment type="function">
    <text evidence="1">Probably involved in the RNA silencing pathway. May bind to short RNAs such as microRNAs (miRNAs) or short interfering RNAs (siRNAs), and represses the translation of mRNAs which are complementary to them (By similarity).</text>
</comment>
<comment type="similarity">
    <text evidence="5">Belongs to the argonaute family. Ago subfamily.</text>
</comment>
<accession>Q0JF58</accession>
<accession>A0A0N7KIJ6</accession>
<keyword id="KW-1185">Reference proteome</keyword>
<keyword id="KW-0943">RNA-mediated gene silencing</keyword>
<protein>
    <recommendedName>
        <fullName>Protein argonaute 4B</fullName>
        <shortName>OsAGO4b</shortName>
    </recommendedName>
</protein>
<sequence length="911" mass="101740">MDAHDGEADELPPPPPVPANVVPIKADDVESEVPANKPAKPKRFPMARPGLGRKGQPIQLLANHYKVSVKSSEEYFFHYNVILKYEDDRPVDGKGVGRKVIDKLQQTYRSELSSKDFAYDGEKSLFTIGALPQVTNEFTVVLEDVSTGKTAANGSPGGNDSPGGSDRKRVRRPYQTKTFKVELCFAAKIPMNAIAQAIKGQESENSQEALRVLDIILRQHSAKQGCLLVRQSFFHNNPNNFVDLGGGVMGCRGFHSSFRGTQSGLSLNIDVSTTMIVKPGPVIDFLLANQKVDHPDRIDWQKAKRALKNLRIRTTPVNSEFKIIGLSDRNCNEQMFSLRQRNGNNGDVDEVEVTVYDYFVKNKGIELRYSGNLPCINVGKPKRPTYFPIELCSLIPLQRYTKALSTLQRSSLVEKSRQKPQERMSVLNDALRHSNYDSDPMLRASGISIAQNFTQVEGRVLQPPKLKAGNGEDIFPRNGRWNFNNKKLIQTCSVDKWAVVNFSARCDVRNLIRDLIRNASAKGIQMAEPFDVFEESPSLRRAPVSRRVDDMFEQIKSKLPGAPKFLLCLLPERKNCEVYGPWKRKCLAEFGIVTQCLAPQRVNDQYLLNLLLKINAKLGGINSLLQIEASPSIPLVSKTPTIILGMDVSHGQPGQSDRPSIAAVVSSRQWPLISKYRASVHTQSPKLEMMSSLFKPRGTEDDGLIRESLIDFYTSSGKRKPDHVIVFRDGVSESQFTQVINIELDQIIEACKFLDEKWSPKFTVIVAQKNHHTKFFQSGSPDNVPPGTVVDKQVCHPRNYDFYMCAHAGMIGTTRPTHYHVLHDEIGFSPDDLQELVHSLSYVYQRSTTAISVVAPICYAHLAAAQVGTFLKFEDMSDASSSQGGHTSVGSVPVPELPRLHEKVRSSMFFC</sequence>
<evidence type="ECO:0000250" key="1"/>
<evidence type="ECO:0000255" key="2">
    <source>
        <dbReference type="PROSITE-ProRule" id="PRU00142"/>
    </source>
</evidence>
<evidence type="ECO:0000255" key="3">
    <source>
        <dbReference type="PROSITE-ProRule" id="PRU00150"/>
    </source>
</evidence>
<evidence type="ECO:0000256" key="4">
    <source>
        <dbReference type="SAM" id="MobiDB-lite"/>
    </source>
</evidence>
<evidence type="ECO:0000305" key="5"/>
<gene>
    <name type="primary">AGO4B</name>
    <name type="ordered locus">Os04g0151800</name>
    <name type="ordered locus">LOC_Os04g06770</name>
    <name type="ORF">OsJ_13701</name>
</gene>
<reference key="1">
    <citation type="journal article" date="2005" name="Nature">
        <title>The map-based sequence of the rice genome.</title>
        <authorList>
            <consortium name="International rice genome sequencing project (IRGSP)"/>
        </authorList>
    </citation>
    <scope>NUCLEOTIDE SEQUENCE [LARGE SCALE GENOMIC DNA]</scope>
    <source>
        <strain>cv. Nipponbare</strain>
    </source>
</reference>
<reference key="2">
    <citation type="journal article" date="2008" name="Nucleic Acids Res.">
        <title>The rice annotation project database (RAP-DB): 2008 update.</title>
        <authorList>
            <consortium name="The rice annotation project (RAP)"/>
        </authorList>
    </citation>
    <scope>GENOME REANNOTATION</scope>
    <source>
        <strain>cv. Nipponbare</strain>
    </source>
</reference>
<reference key="3">
    <citation type="journal article" date="2013" name="Rice">
        <title>Improvement of the Oryza sativa Nipponbare reference genome using next generation sequence and optical map data.</title>
        <authorList>
            <person name="Kawahara Y."/>
            <person name="de la Bastide M."/>
            <person name="Hamilton J.P."/>
            <person name="Kanamori H."/>
            <person name="McCombie W.R."/>
            <person name="Ouyang S."/>
            <person name="Schwartz D.C."/>
            <person name="Tanaka T."/>
            <person name="Wu J."/>
            <person name="Zhou S."/>
            <person name="Childs K.L."/>
            <person name="Davidson R.M."/>
            <person name="Lin H."/>
            <person name="Quesada-Ocampo L."/>
            <person name="Vaillancourt B."/>
            <person name="Sakai H."/>
            <person name="Lee S.S."/>
            <person name="Kim J."/>
            <person name="Numa H."/>
            <person name="Itoh T."/>
            <person name="Buell C.R."/>
            <person name="Matsumoto T."/>
        </authorList>
    </citation>
    <scope>GENOME REANNOTATION</scope>
    <source>
        <strain>cv. Nipponbare</strain>
    </source>
</reference>
<reference key="4">
    <citation type="journal article" date="2005" name="PLoS Biol.">
        <title>The genomes of Oryza sativa: a history of duplications.</title>
        <authorList>
            <person name="Yu J."/>
            <person name="Wang J."/>
            <person name="Lin W."/>
            <person name="Li S."/>
            <person name="Li H."/>
            <person name="Zhou J."/>
            <person name="Ni P."/>
            <person name="Dong W."/>
            <person name="Hu S."/>
            <person name="Zeng C."/>
            <person name="Zhang J."/>
            <person name="Zhang Y."/>
            <person name="Li R."/>
            <person name="Xu Z."/>
            <person name="Li S."/>
            <person name="Li X."/>
            <person name="Zheng H."/>
            <person name="Cong L."/>
            <person name="Lin L."/>
            <person name="Yin J."/>
            <person name="Geng J."/>
            <person name="Li G."/>
            <person name="Shi J."/>
            <person name="Liu J."/>
            <person name="Lv H."/>
            <person name="Li J."/>
            <person name="Wang J."/>
            <person name="Deng Y."/>
            <person name="Ran L."/>
            <person name="Shi X."/>
            <person name="Wang X."/>
            <person name="Wu Q."/>
            <person name="Li C."/>
            <person name="Ren X."/>
            <person name="Wang J."/>
            <person name="Wang X."/>
            <person name="Li D."/>
            <person name="Liu D."/>
            <person name="Zhang X."/>
            <person name="Ji Z."/>
            <person name="Zhao W."/>
            <person name="Sun Y."/>
            <person name="Zhang Z."/>
            <person name="Bao J."/>
            <person name="Han Y."/>
            <person name="Dong L."/>
            <person name="Ji J."/>
            <person name="Chen P."/>
            <person name="Wu S."/>
            <person name="Liu J."/>
            <person name="Xiao Y."/>
            <person name="Bu D."/>
            <person name="Tan J."/>
            <person name="Yang L."/>
            <person name="Ye C."/>
            <person name="Zhang J."/>
            <person name="Xu J."/>
            <person name="Zhou Y."/>
            <person name="Yu Y."/>
            <person name="Zhang B."/>
            <person name="Zhuang S."/>
            <person name="Wei H."/>
            <person name="Liu B."/>
            <person name="Lei M."/>
            <person name="Yu H."/>
            <person name="Li Y."/>
            <person name="Xu H."/>
            <person name="Wei S."/>
            <person name="He X."/>
            <person name="Fang L."/>
            <person name="Zhang Z."/>
            <person name="Zhang Y."/>
            <person name="Huang X."/>
            <person name="Su Z."/>
            <person name="Tong W."/>
            <person name="Li J."/>
            <person name="Tong Z."/>
            <person name="Li S."/>
            <person name="Ye J."/>
            <person name="Wang L."/>
            <person name="Fang L."/>
            <person name="Lei T."/>
            <person name="Chen C.-S."/>
            <person name="Chen H.-C."/>
            <person name="Xu Z."/>
            <person name="Li H."/>
            <person name="Huang H."/>
            <person name="Zhang F."/>
            <person name="Xu H."/>
            <person name="Li N."/>
            <person name="Zhao C."/>
            <person name="Li S."/>
            <person name="Dong L."/>
            <person name="Huang Y."/>
            <person name="Li L."/>
            <person name="Xi Y."/>
            <person name="Qi Q."/>
            <person name="Li W."/>
            <person name="Zhang B."/>
            <person name="Hu W."/>
            <person name="Zhang Y."/>
            <person name="Tian X."/>
            <person name="Jiao Y."/>
            <person name="Liang X."/>
            <person name="Jin J."/>
            <person name="Gao L."/>
            <person name="Zheng W."/>
            <person name="Hao B."/>
            <person name="Liu S.-M."/>
            <person name="Wang W."/>
            <person name="Yuan L."/>
            <person name="Cao M."/>
            <person name="McDermott J."/>
            <person name="Samudrala R."/>
            <person name="Wang J."/>
            <person name="Wong G.K.-S."/>
            <person name="Yang H."/>
        </authorList>
    </citation>
    <scope>NUCLEOTIDE SEQUENCE [LARGE SCALE GENOMIC DNA]</scope>
    <source>
        <strain>cv. Nipponbare</strain>
    </source>
</reference>
<reference key="5">
    <citation type="journal article" date="2003" name="Science">
        <title>Collection, mapping, and annotation of over 28,000 cDNA clones from japonica rice.</title>
        <authorList>
            <consortium name="The rice full-length cDNA consortium"/>
        </authorList>
    </citation>
    <scope>NUCLEOTIDE SEQUENCE [LARGE SCALE MRNA]</scope>
    <source>
        <strain>cv. Nipponbare</strain>
    </source>
</reference>
<reference key="6">
    <citation type="journal article" date="2008" name="BMC Genomics">
        <title>Genome-wide identification, organization and phylogenetic analysis of dicer-like, argonaute and RNA-dependent RNA polymerase gene families and their expression analysis during reproductive development and stress in rice.</title>
        <authorList>
            <person name="Kapoor M."/>
            <person name="Arora R."/>
            <person name="Lama T."/>
            <person name="Nijhawan A."/>
            <person name="Khurana J.P."/>
            <person name="Tyagi A.K."/>
            <person name="Kapoor S."/>
        </authorList>
    </citation>
    <scope>GENE FAMILY</scope>
    <scope>NOMENCLATURE</scope>
</reference>